<protein>
    <recommendedName>
        <fullName>UPF0145 protein</fullName>
    </recommendedName>
</protein>
<evidence type="ECO:0000305" key="1"/>
<comment type="similarity">
    <text evidence="1">Belongs to the UPF0145 family.</text>
</comment>
<comment type="sequence caution" evidence="1">
    <conflict type="erroneous initiation">
        <sequence resource="EMBL-CDS" id="CAC80661"/>
    </conflict>
</comment>
<organism>
    <name type="scientific">Listeria ivanovii</name>
    <dbReference type="NCBI Taxonomy" id="1638"/>
    <lineage>
        <taxon>Bacteria</taxon>
        <taxon>Bacillati</taxon>
        <taxon>Bacillota</taxon>
        <taxon>Bacilli</taxon>
        <taxon>Bacillales</taxon>
        <taxon>Listeriaceae</taxon>
        <taxon>Listeria</taxon>
    </lineage>
</organism>
<reference key="1">
    <citation type="submission" date="1999-09" db="EMBL/GenBank/DDBJ databases">
        <title>The evolution of virulence determinants in the Listeria genus.</title>
        <authorList>
            <person name="Ng E.Y."/>
            <person name="Goebel W."/>
        </authorList>
    </citation>
    <scope>NUCLEOTIDE SEQUENCE [GENOMIC DNA]</scope>
    <source>
        <strain>ATCC 19119 / DSM 20750 / BCRC 14844 / JCM 7681 / KCTC 3444 / NCTC 11846 / NRRL B-33017 / SLCC 2379 / WDCM 00018</strain>
    </source>
</reference>
<name>Y208_LISIV</name>
<proteinExistence type="inferred from homology"/>
<accession>Q8VMY3</accession>
<accession>Q8VMY2</accession>
<dbReference type="EMBL" id="AJ249805">
    <property type="protein sequence ID" value="CAC80660.1"/>
    <property type="molecule type" value="Genomic_DNA"/>
</dbReference>
<dbReference type="EMBL" id="AJ249805">
    <property type="protein sequence ID" value="CAC80661.1"/>
    <property type="status" value="ALT_INIT"/>
    <property type="molecule type" value="Genomic_DNA"/>
</dbReference>
<dbReference type="RefSeq" id="WP_003718285.1">
    <property type="nucleotide sequence ID" value="NZ_RBYI01000017.1"/>
</dbReference>
<dbReference type="SMR" id="Q8VMY3"/>
<dbReference type="GeneID" id="57075175"/>
<dbReference type="OMA" id="SGEAIMG"/>
<dbReference type="Gene3D" id="3.30.110.70">
    <property type="entry name" value="Hypothetical protein apc22750. Chain B"/>
    <property type="match status" value="1"/>
</dbReference>
<dbReference type="HAMAP" id="MF_00338">
    <property type="entry name" value="UPF0145"/>
    <property type="match status" value="1"/>
</dbReference>
<dbReference type="InterPro" id="IPR035439">
    <property type="entry name" value="UPF0145_dom_sf"/>
</dbReference>
<dbReference type="InterPro" id="IPR002765">
    <property type="entry name" value="UPF0145_YbjQ-like"/>
</dbReference>
<dbReference type="NCBIfam" id="NF002224">
    <property type="entry name" value="PRK01119.1"/>
    <property type="match status" value="1"/>
</dbReference>
<dbReference type="PANTHER" id="PTHR34068">
    <property type="entry name" value="UPF0145 PROTEIN YBJQ"/>
    <property type="match status" value="1"/>
</dbReference>
<dbReference type="PANTHER" id="PTHR34068:SF1">
    <property type="entry name" value="UPF0145 PROTEIN YBJQ"/>
    <property type="match status" value="1"/>
</dbReference>
<dbReference type="Pfam" id="PF01906">
    <property type="entry name" value="YbjQ_1"/>
    <property type="match status" value="1"/>
</dbReference>
<dbReference type="SUPFAM" id="SSF117782">
    <property type="entry name" value="YbjQ-like"/>
    <property type="match status" value="1"/>
</dbReference>
<feature type="chain" id="PRO_0000138476" description="UPF0145 protein">
    <location>
        <begin position="1"/>
        <end position="110"/>
    </location>
</feature>
<sequence>MIVTTSPNIEGKQIIEYKKIVFGEVITGVNFMKDIGAGLRNFFGGRSQGYEDELINAREEAIKEMEQRAKDIGANAVIGVDIDYEVLGADNGMLMVTASGTAVVIEAQDY</sequence>